<proteinExistence type="evidence at protein level"/>
<sequence length="66" mass="7259">RTCLISPSSTSQTCPKGQDICFTKAFCDRWCSSRGPVIEQGCAATCPEFTSRYKSLLCCTTDNCNH</sequence>
<dbReference type="PIR" id="A28644">
    <property type="entry name" value="A28644"/>
</dbReference>
<dbReference type="SMR" id="P15815"/>
<dbReference type="GO" id="GO:0005576">
    <property type="term" value="C:extracellular region"/>
    <property type="evidence" value="ECO:0007669"/>
    <property type="project" value="UniProtKB-SubCell"/>
</dbReference>
<dbReference type="GO" id="GO:0030550">
    <property type="term" value="F:acetylcholine receptor inhibitor activity"/>
    <property type="evidence" value="ECO:0007669"/>
    <property type="project" value="UniProtKB-KW"/>
</dbReference>
<dbReference type="GO" id="GO:0099106">
    <property type="term" value="F:ion channel regulator activity"/>
    <property type="evidence" value="ECO:0007669"/>
    <property type="project" value="UniProtKB-KW"/>
</dbReference>
<dbReference type="GO" id="GO:0090729">
    <property type="term" value="F:toxin activity"/>
    <property type="evidence" value="ECO:0007669"/>
    <property type="project" value="UniProtKB-KW"/>
</dbReference>
<dbReference type="CDD" id="cd00206">
    <property type="entry name" value="TFP_snake_toxin"/>
    <property type="match status" value="1"/>
</dbReference>
<dbReference type="Gene3D" id="2.10.60.10">
    <property type="entry name" value="CD59"/>
    <property type="match status" value="1"/>
</dbReference>
<dbReference type="InterPro" id="IPR003571">
    <property type="entry name" value="Snake_3FTx"/>
</dbReference>
<dbReference type="InterPro" id="IPR045860">
    <property type="entry name" value="Snake_toxin-like_sf"/>
</dbReference>
<dbReference type="InterPro" id="IPR018354">
    <property type="entry name" value="Snake_toxin_con_site"/>
</dbReference>
<dbReference type="InterPro" id="IPR054131">
    <property type="entry name" value="Toxin_cobra-type"/>
</dbReference>
<dbReference type="Pfam" id="PF21947">
    <property type="entry name" value="Toxin_cobra-type"/>
    <property type="match status" value="1"/>
</dbReference>
<dbReference type="SUPFAM" id="SSF57302">
    <property type="entry name" value="Snake toxin-like"/>
    <property type="match status" value="1"/>
</dbReference>
<dbReference type="PROSITE" id="PS00272">
    <property type="entry name" value="SNAKE_TOXIN"/>
    <property type="match status" value="1"/>
</dbReference>
<accession>P15815</accession>
<protein>
    <recommendedName>
        <fullName evidence="6">Kappa-flavitoxin</fullName>
        <shortName evidence="7">Kappa-ftx</shortName>
        <shortName>Kappa-fvt</shortName>
    </recommendedName>
    <alternativeName>
        <fullName>Long neurotoxin 2</fullName>
    </alternativeName>
</protein>
<feature type="chain" id="PRO_0000093533" description="Kappa-flavitoxin">
    <location>
        <begin position="1"/>
        <end position="66"/>
    </location>
</feature>
<feature type="disulfide bond" evidence="1">
    <location>
        <begin position="3"/>
        <end position="21"/>
    </location>
</feature>
<feature type="disulfide bond" evidence="1">
    <location>
        <begin position="14"/>
        <end position="42"/>
    </location>
</feature>
<feature type="disulfide bond" evidence="1">
    <location>
        <begin position="27"/>
        <end position="31"/>
    </location>
</feature>
<feature type="disulfide bond" evidence="1">
    <location>
        <begin position="46"/>
        <end position="58"/>
    </location>
</feature>
<feature type="disulfide bond" evidence="1">
    <location>
        <begin position="59"/>
        <end position="64"/>
    </location>
</feature>
<keyword id="KW-0008">Acetylcholine receptor inhibiting toxin</keyword>
<keyword id="KW-0903">Direct protein sequencing</keyword>
<keyword id="KW-1015">Disulfide bond</keyword>
<keyword id="KW-0872">Ion channel impairing toxin</keyword>
<keyword id="KW-0528">Neurotoxin</keyword>
<keyword id="KW-0629">Postsynaptic neurotoxin</keyword>
<keyword id="KW-0964">Secreted</keyword>
<keyword id="KW-0800">Toxin</keyword>
<evidence type="ECO:0000250" key="1">
    <source>
        <dbReference type="UniProtKB" id="P01398"/>
    </source>
</evidence>
<evidence type="ECO:0000250" key="2">
    <source>
        <dbReference type="UniProtKB" id="P15816"/>
    </source>
</evidence>
<evidence type="ECO:0000269" key="3">
    <source>
    </source>
</evidence>
<evidence type="ECO:0000269" key="4">
    <source>
    </source>
</evidence>
<evidence type="ECO:0000269" key="5">
    <source>
    </source>
</evidence>
<evidence type="ECO:0000303" key="6">
    <source>
    </source>
</evidence>
<evidence type="ECO:0000303" key="7">
    <source>
    </source>
</evidence>
<evidence type="ECO:0000305" key="8"/>
<name>3LKF_BUNFL</name>
<reference key="1">
    <citation type="journal article" date="1988" name="Biochemistry">
        <title>Amino acid sequence of kappa-flavitoxin: establishment of a new family of snake venom neurotoxins.</title>
        <authorList>
            <person name="Grant G.A."/>
            <person name="Frazier M.W."/>
            <person name="Chiappinelli V.A."/>
        </authorList>
    </citation>
    <scope>PROTEIN SEQUENCE</scope>
    <scope>SUBCELLULAR LOCATION</scope>
    <source>
        <tissue>Venom</tissue>
    </source>
</reference>
<reference key="2">
    <citation type="journal article" date="1987" name="Brain Res.">
        <title>Kappa-flavitoxin: isolation of a new neuronal nicotinic receptor antagonist that is structurally related to kappa-bungarotoxin.</title>
        <authorList>
            <person name="Chiappinelli V.A."/>
            <person name="Wolf K.M."/>
            <person name="DeBin J.A."/>
            <person name="Holt I.L."/>
        </authorList>
    </citation>
    <scope>FUNCTION</scope>
    <source>
        <tissue>Venom</tissue>
    </source>
</reference>
<reference key="3">
    <citation type="journal article" date="1993" name="Biochemistry">
        <title>Homologous kappa-neurotoxins exhibit residue-specific interactions with the alpha 3 subunit of the nicotinic acetylcholine receptor: a comparison of the structural requirements for kappa-bungarotoxin and kappa-flavitoxin binding.</title>
        <authorList>
            <person name="McLane K.E."/>
            <person name="Weaver W.R."/>
            <person name="Lei S."/>
            <person name="Chiappinelli V.A."/>
            <person name="Conti-Tronconi B.M."/>
        </authorList>
    </citation>
    <scope>FUNCTION</scope>
</reference>
<comment type="function">
    <text evidence="4 5">Postsynaptic neurotoxin that binds and inhibits neuronal nicotinic acetylcholine receptors (nAChR) with high affinity (IC(50)&lt;100 nM). Is a selective, and slowly reversible antagonist of alpha-3/CHRNA3-containing and some alpha-4/CHRNA4-containing AChRs.</text>
</comment>
<comment type="subunit">
    <text evidence="2">Homo- and heterodimer; non-covalently linked.</text>
</comment>
<comment type="subcellular location">
    <subcellularLocation>
        <location evidence="3">Secreted</location>
    </subcellularLocation>
</comment>
<comment type="tissue specificity">
    <text evidence="8">Expressed by the venom gland.</text>
</comment>
<comment type="similarity">
    <text evidence="8">Belongs to the three-finger toxin family. Long-chain subfamily. Kappa-neurotoxin sub-subfamily.</text>
</comment>
<organism>
    <name type="scientific">Bungarus flaviceps flaviceps</name>
    <name type="common">Red-headed krait</name>
    <dbReference type="NCBI Taxonomy" id="8615"/>
    <lineage>
        <taxon>Eukaryota</taxon>
        <taxon>Metazoa</taxon>
        <taxon>Chordata</taxon>
        <taxon>Craniata</taxon>
        <taxon>Vertebrata</taxon>
        <taxon>Euteleostomi</taxon>
        <taxon>Lepidosauria</taxon>
        <taxon>Squamata</taxon>
        <taxon>Bifurcata</taxon>
        <taxon>Unidentata</taxon>
        <taxon>Episquamata</taxon>
        <taxon>Toxicofera</taxon>
        <taxon>Serpentes</taxon>
        <taxon>Colubroidea</taxon>
        <taxon>Elapidae</taxon>
        <taxon>Bungarinae</taxon>
        <taxon>Bungarus</taxon>
    </lineage>
</organism>